<evidence type="ECO:0000255" key="1"/>
<evidence type="ECO:0000255" key="2">
    <source>
        <dbReference type="PROSITE-ProRule" id="PRU00076"/>
    </source>
</evidence>
<evidence type="ECO:0000256" key="3">
    <source>
        <dbReference type="SAM" id="MobiDB-lite"/>
    </source>
</evidence>
<evidence type="ECO:0000269" key="4">
    <source>
    </source>
</evidence>
<evidence type="ECO:0000269" key="5">
    <source>
    </source>
</evidence>
<evidence type="ECO:0000269" key="6">
    <source>
    </source>
</evidence>
<evidence type="ECO:0000269" key="7">
    <source>
    </source>
</evidence>
<evidence type="ECO:0000269" key="8">
    <source>
    </source>
</evidence>
<evidence type="ECO:0000269" key="9">
    <source>
    </source>
</evidence>
<evidence type="ECO:0000269" key="10">
    <source>
    </source>
</evidence>
<evidence type="ECO:0000305" key="11"/>
<evidence type="ECO:0007829" key="12">
    <source>
        <dbReference type="PDB" id="8FIA"/>
    </source>
</evidence>
<gene>
    <name type="primary">Ten-m</name>
    <name type="synonym">odz</name>
    <name type="ORF">CG5723</name>
</gene>
<protein>
    <recommendedName>
        <fullName>Teneurin-m</fullName>
        <shortName>Tenm</shortName>
    </recommendedName>
    <alternativeName>
        <fullName>Odd Oz protein</fullName>
    </alternativeName>
    <alternativeName>
        <fullName>Tenascin-like protein</fullName>
    </alternativeName>
</protein>
<reference key="1">
    <citation type="journal article" date="1994" name="EMBO J.">
        <title>Tenm, a Drosophila gene related to tenascin, is a new pair-rule gene.</title>
        <authorList>
            <person name="Baumgartner S."/>
            <person name="Martin D."/>
            <person name="Hagios C."/>
            <person name="Chiquet-Ehrismann R."/>
        </authorList>
    </citation>
    <scope>NUCLEOTIDE SEQUENCE [MRNA] (ISOFORM B)</scope>
    <scope>DEVELOPMENTAL STAGE</scope>
    <source>
        <strain>Canton-S</strain>
    </source>
</reference>
<reference key="2">
    <citation type="journal article" date="1997" name="Gene">
        <title>The genetics and molecular structure of the Drosophila pair-rule gene odd Oz (odz).</title>
        <authorList>
            <person name="Levine A."/>
            <person name="Gartenberg D."/>
            <person name="Yakov R."/>
            <person name="Lieberman Y."/>
            <person name="Budai-Hadrian O."/>
            <person name="Bashan-Ahrend A."/>
            <person name="Wides R."/>
        </authorList>
    </citation>
    <scope>NUCLEOTIDE SEQUENCE [GENOMIC DNA / MRNA] (ISOFORM B)</scope>
    <scope>DEVELOPMENTAL STAGE</scope>
</reference>
<reference key="3">
    <citation type="journal article" date="2000" name="Science">
        <title>The genome sequence of Drosophila melanogaster.</title>
        <authorList>
            <person name="Adams M.D."/>
            <person name="Celniker S.E."/>
            <person name="Holt R.A."/>
            <person name="Evans C.A."/>
            <person name="Gocayne J.D."/>
            <person name="Amanatides P.G."/>
            <person name="Scherer S.E."/>
            <person name="Li P.W."/>
            <person name="Hoskins R.A."/>
            <person name="Galle R.F."/>
            <person name="George R.A."/>
            <person name="Lewis S.E."/>
            <person name="Richards S."/>
            <person name="Ashburner M."/>
            <person name="Henderson S.N."/>
            <person name="Sutton G.G."/>
            <person name="Wortman J.R."/>
            <person name="Yandell M.D."/>
            <person name="Zhang Q."/>
            <person name="Chen L.X."/>
            <person name="Brandon R.C."/>
            <person name="Rogers Y.-H.C."/>
            <person name="Blazej R.G."/>
            <person name="Champe M."/>
            <person name="Pfeiffer B.D."/>
            <person name="Wan K.H."/>
            <person name="Doyle C."/>
            <person name="Baxter E.G."/>
            <person name="Helt G."/>
            <person name="Nelson C.R."/>
            <person name="Miklos G.L.G."/>
            <person name="Abril J.F."/>
            <person name="Agbayani A."/>
            <person name="An H.-J."/>
            <person name="Andrews-Pfannkoch C."/>
            <person name="Baldwin D."/>
            <person name="Ballew R.M."/>
            <person name="Basu A."/>
            <person name="Baxendale J."/>
            <person name="Bayraktaroglu L."/>
            <person name="Beasley E.M."/>
            <person name="Beeson K.Y."/>
            <person name="Benos P.V."/>
            <person name="Berman B.P."/>
            <person name="Bhandari D."/>
            <person name="Bolshakov S."/>
            <person name="Borkova D."/>
            <person name="Botchan M.R."/>
            <person name="Bouck J."/>
            <person name="Brokstein P."/>
            <person name="Brottier P."/>
            <person name="Burtis K.C."/>
            <person name="Busam D.A."/>
            <person name="Butler H."/>
            <person name="Cadieu E."/>
            <person name="Center A."/>
            <person name="Chandra I."/>
            <person name="Cherry J.M."/>
            <person name="Cawley S."/>
            <person name="Dahlke C."/>
            <person name="Davenport L.B."/>
            <person name="Davies P."/>
            <person name="de Pablos B."/>
            <person name="Delcher A."/>
            <person name="Deng Z."/>
            <person name="Mays A.D."/>
            <person name="Dew I."/>
            <person name="Dietz S.M."/>
            <person name="Dodson K."/>
            <person name="Doup L.E."/>
            <person name="Downes M."/>
            <person name="Dugan-Rocha S."/>
            <person name="Dunkov B.C."/>
            <person name="Dunn P."/>
            <person name="Durbin K.J."/>
            <person name="Evangelista C.C."/>
            <person name="Ferraz C."/>
            <person name="Ferriera S."/>
            <person name="Fleischmann W."/>
            <person name="Fosler C."/>
            <person name="Gabrielian A.E."/>
            <person name="Garg N.S."/>
            <person name="Gelbart W.M."/>
            <person name="Glasser K."/>
            <person name="Glodek A."/>
            <person name="Gong F."/>
            <person name="Gorrell J.H."/>
            <person name="Gu Z."/>
            <person name="Guan P."/>
            <person name="Harris M."/>
            <person name="Harris N.L."/>
            <person name="Harvey D.A."/>
            <person name="Heiman T.J."/>
            <person name="Hernandez J.R."/>
            <person name="Houck J."/>
            <person name="Hostin D."/>
            <person name="Houston K.A."/>
            <person name="Howland T.J."/>
            <person name="Wei M.-H."/>
            <person name="Ibegwam C."/>
            <person name="Jalali M."/>
            <person name="Kalush F."/>
            <person name="Karpen G.H."/>
            <person name="Ke Z."/>
            <person name="Kennison J.A."/>
            <person name="Ketchum K.A."/>
            <person name="Kimmel B.E."/>
            <person name="Kodira C.D."/>
            <person name="Kraft C.L."/>
            <person name="Kravitz S."/>
            <person name="Kulp D."/>
            <person name="Lai Z."/>
            <person name="Lasko P."/>
            <person name="Lei Y."/>
            <person name="Levitsky A.A."/>
            <person name="Li J.H."/>
            <person name="Li Z."/>
            <person name="Liang Y."/>
            <person name="Lin X."/>
            <person name="Liu X."/>
            <person name="Mattei B."/>
            <person name="McIntosh T.C."/>
            <person name="McLeod M.P."/>
            <person name="McPherson D."/>
            <person name="Merkulov G."/>
            <person name="Milshina N.V."/>
            <person name="Mobarry C."/>
            <person name="Morris J."/>
            <person name="Moshrefi A."/>
            <person name="Mount S.M."/>
            <person name="Moy M."/>
            <person name="Murphy B."/>
            <person name="Murphy L."/>
            <person name="Muzny D.M."/>
            <person name="Nelson D.L."/>
            <person name="Nelson D.R."/>
            <person name="Nelson K.A."/>
            <person name="Nixon K."/>
            <person name="Nusskern D.R."/>
            <person name="Pacleb J.M."/>
            <person name="Palazzolo M."/>
            <person name="Pittman G.S."/>
            <person name="Pan S."/>
            <person name="Pollard J."/>
            <person name="Puri V."/>
            <person name="Reese M.G."/>
            <person name="Reinert K."/>
            <person name="Remington K."/>
            <person name="Saunders R.D.C."/>
            <person name="Scheeler F."/>
            <person name="Shen H."/>
            <person name="Shue B.C."/>
            <person name="Siden-Kiamos I."/>
            <person name="Simpson M."/>
            <person name="Skupski M.P."/>
            <person name="Smith T.J."/>
            <person name="Spier E."/>
            <person name="Spradling A.C."/>
            <person name="Stapleton M."/>
            <person name="Strong R."/>
            <person name="Sun E."/>
            <person name="Svirskas R."/>
            <person name="Tector C."/>
            <person name="Turner R."/>
            <person name="Venter E."/>
            <person name="Wang A.H."/>
            <person name="Wang X."/>
            <person name="Wang Z.-Y."/>
            <person name="Wassarman D.A."/>
            <person name="Weinstock G.M."/>
            <person name="Weissenbach J."/>
            <person name="Williams S.M."/>
            <person name="Woodage T."/>
            <person name="Worley K.C."/>
            <person name="Wu D."/>
            <person name="Yang S."/>
            <person name="Yao Q.A."/>
            <person name="Ye J."/>
            <person name="Yeh R.-F."/>
            <person name="Zaveri J.S."/>
            <person name="Zhan M."/>
            <person name="Zhang G."/>
            <person name="Zhao Q."/>
            <person name="Zheng L."/>
            <person name="Zheng X.H."/>
            <person name="Zhong F.N."/>
            <person name="Zhong W."/>
            <person name="Zhou X."/>
            <person name="Zhu S.C."/>
            <person name="Zhu X."/>
            <person name="Smith H.O."/>
            <person name="Gibbs R.A."/>
            <person name="Myers E.W."/>
            <person name="Rubin G.M."/>
            <person name="Venter J.C."/>
        </authorList>
    </citation>
    <scope>NUCLEOTIDE SEQUENCE [LARGE SCALE GENOMIC DNA]</scope>
    <source>
        <strain>Berkeley</strain>
    </source>
</reference>
<reference key="4">
    <citation type="journal article" date="2002" name="Genome Biol.">
        <title>Annotation of the Drosophila melanogaster euchromatic genome: a systematic review.</title>
        <authorList>
            <person name="Misra S."/>
            <person name="Crosby M.A."/>
            <person name="Mungall C.J."/>
            <person name="Matthews B.B."/>
            <person name="Campbell K.S."/>
            <person name="Hradecky P."/>
            <person name="Huang Y."/>
            <person name="Kaminker J.S."/>
            <person name="Millburn G.H."/>
            <person name="Prochnik S.E."/>
            <person name="Smith C.D."/>
            <person name="Tupy J.L."/>
            <person name="Whitfield E.J."/>
            <person name="Bayraktaroglu L."/>
            <person name="Berman B.P."/>
            <person name="Bettencourt B.R."/>
            <person name="Celniker S.E."/>
            <person name="de Grey A.D.N.J."/>
            <person name="Drysdale R.A."/>
            <person name="Harris N.L."/>
            <person name="Richter J."/>
            <person name="Russo S."/>
            <person name="Schroeder A.J."/>
            <person name="Shu S.Q."/>
            <person name="Stapleton M."/>
            <person name="Yamada C."/>
            <person name="Ashburner M."/>
            <person name="Gelbart W.M."/>
            <person name="Rubin G.M."/>
            <person name="Lewis S.E."/>
        </authorList>
    </citation>
    <scope>GENOME REANNOTATION</scope>
    <source>
        <strain>Berkeley</strain>
    </source>
</reference>
<reference key="5">
    <citation type="journal article" date="1994" name="Cell">
        <title>Odd Oz: a novel Drosophila pair rule gene.</title>
        <authorList>
            <person name="Levine A."/>
            <person name="Bashan-Ahrend A."/>
            <person name="Budai-Hadrian O."/>
            <person name="Gartenberg D."/>
            <person name="Menasherow S."/>
            <person name="Wides R."/>
        </authorList>
    </citation>
    <scope>PARTIAL NUCLEOTIDE SEQUENCE [MRNA]</scope>
    <scope>FUNCTION</scope>
    <scope>PROTEOLYTIC PROCESSING</scope>
    <scope>PHOSPHORYLATION</scope>
</reference>
<reference key="6">
    <citation type="journal article" date="2007" name="Glycobiology">
        <title>Identification of N-glycosylated proteins from the central nervous system of Drosophila melanogaster.</title>
        <authorList>
            <person name="Koles K."/>
            <person name="Lim J.-M."/>
            <person name="Aoki K."/>
            <person name="Porterfield M."/>
            <person name="Tiemeyer M."/>
            <person name="Wells L."/>
            <person name="Panin V."/>
        </authorList>
    </citation>
    <scope>GLYCOSYLATION [LARGE SCALE ANALYSIS] AT ASN-857</scope>
    <scope>IDENTIFICATION BY MASS SPECTROMETRY</scope>
    <source>
        <strain>Oregon-R</strain>
        <tissue>Head</tissue>
    </source>
</reference>
<reference key="7">
    <citation type="journal article" date="2011" name="PLoS ONE">
        <title>Drosophila Ten-m and filamin affect motor neuron growth cone guidance.</title>
        <authorList>
            <person name="Zheng L."/>
            <person name="Michelson Y."/>
            <person name="Freger V."/>
            <person name="Avraham Z."/>
            <person name="Venken K.J."/>
            <person name="Bellen H.J."/>
            <person name="Justice M.J."/>
            <person name="Wides R."/>
        </authorList>
    </citation>
    <scope>FUNCTION</scope>
    <scope>INTERACTION WITH CHER</scope>
    <scope>DISRUPTION PHENOTYPE</scope>
    <scope>DEVELOPMENTAL STAGE</scope>
</reference>
<reference key="8">
    <citation type="journal article" date="2012" name="Nature">
        <title>Teneurins instruct synaptic partner matching in an olfactory map.</title>
        <authorList>
            <person name="Hong W."/>
            <person name="Mosca T.J."/>
            <person name="Luo L."/>
        </authorList>
    </citation>
    <scope>FUNCTION IN SYNAPSE FORMATION</scope>
    <scope>HOMODIMERIZATION</scope>
    <scope>HETERODIMERIZATION</scope>
    <scope>INTERACTION WITH TEN-A</scope>
    <scope>SUBCELLULAR LOCATION</scope>
    <scope>DEVELOPMENTAL STAGE</scope>
</reference>
<reference key="9">
    <citation type="journal article" date="2012" name="Nature">
        <title>Trans-synaptic Teneurin signalling in neuromuscular synapse organization and target choice.</title>
        <authorList>
            <person name="Mosca T.J."/>
            <person name="Hong W."/>
            <person name="Dani V.S."/>
            <person name="Favaloro V."/>
            <person name="Luo L."/>
        </authorList>
    </citation>
    <scope>FUNCTION IN NEUROMUSCULAR SYNAPSE FORMATION</scope>
    <scope>INTERACTION WITH ALPHA-SPEC AND TEN-A</scope>
    <scope>TISSUE SPECIFICITY</scope>
    <scope>SUBCELLULAR LOCATION</scope>
</reference>
<feature type="chain" id="PRO_0000421021" description="Teneurin-m">
    <location>
        <begin position="1"/>
        <end position="2731"/>
    </location>
</feature>
<feature type="topological domain" description="Cytoplasmic" evidence="1">
    <location>
        <begin position="1"/>
        <end position="229"/>
    </location>
</feature>
<feature type="transmembrane region" description="Helical" evidence="1">
    <location>
        <begin position="230"/>
        <end position="250"/>
    </location>
</feature>
<feature type="topological domain" description="Extracellular" evidence="1">
    <location>
        <begin position="251"/>
        <end position="2731"/>
    </location>
</feature>
<feature type="domain" description="EGF-like 1" evidence="2">
    <location>
        <begin position="536"/>
        <end position="572"/>
    </location>
</feature>
<feature type="domain" description="EGF-like 2" evidence="2">
    <location>
        <begin position="574"/>
        <end position="606"/>
    </location>
</feature>
<feature type="domain" description="EGF-like 3" evidence="2">
    <location>
        <begin position="643"/>
        <end position="676"/>
    </location>
</feature>
<feature type="domain" description="EGF-like 4" evidence="2">
    <location>
        <begin position="738"/>
        <end position="774"/>
    </location>
</feature>
<feature type="repeat" description="NHL 1">
    <location>
        <begin position="1160"/>
        <end position="1201"/>
    </location>
</feature>
<feature type="repeat" description="NHL 2">
    <location>
        <begin position="1202"/>
        <end position="1246"/>
    </location>
</feature>
<feature type="repeat" description="NHL 3">
    <location>
        <begin position="1391"/>
        <end position="1434"/>
    </location>
</feature>
<feature type="repeat" description="NHL 4">
    <location>
        <begin position="1459"/>
        <end position="1502"/>
    </location>
</feature>
<feature type="repeat" description="YD" evidence="1">
    <location>
        <begin position="1618"/>
        <end position="1652"/>
    </location>
</feature>
<feature type="region of interest" description="Disordered" evidence="3">
    <location>
        <begin position="1"/>
        <end position="60"/>
    </location>
</feature>
<feature type="region of interest" description="Disordered" evidence="3">
    <location>
        <begin position="103"/>
        <end position="136"/>
    </location>
</feature>
<feature type="region of interest" description="Disordered" evidence="3">
    <location>
        <begin position="321"/>
        <end position="387"/>
    </location>
</feature>
<feature type="region of interest" description="Disordered" evidence="3">
    <location>
        <begin position="2691"/>
        <end position="2731"/>
    </location>
</feature>
<feature type="compositionally biased region" description="Pro residues" evidence="3">
    <location>
        <begin position="110"/>
        <end position="119"/>
    </location>
</feature>
<feature type="compositionally biased region" description="Polar residues" evidence="3">
    <location>
        <begin position="120"/>
        <end position="136"/>
    </location>
</feature>
<feature type="compositionally biased region" description="Low complexity" evidence="3">
    <location>
        <begin position="322"/>
        <end position="370"/>
    </location>
</feature>
<feature type="compositionally biased region" description="Basic residues" evidence="3">
    <location>
        <begin position="2704"/>
        <end position="2724"/>
    </location>
</feature>
<feature type="glycosylation site" description="N-linked (GlcNAc...) asparagine" evidence="4">
    <location>
        <position position="857"/>
    </location>
</feature>
<feature type="disulfide bond" evidence="2">
    <location>
        <begin position="540"/>
        <end position="549"/>
    </location>
</feature>
<feature type="disulfide bond" evidence="2">
    <location>
        <begin position="545"/>
        <end position="560"/>
    </location>
</feature>
<feature type="disulfide bond" evidence="2">
    <location>
        <begin position="562"/>
        <end position="571"/>
    </location>
</feature>
<feature type="disulfide bond" evidence="2">
    <location>
        <begin position="578"/>
        <end position="589"/>
    </location>
</feature>
<feature type="disulfide bond" evidence="2">
    <location>
        <begin position="583"/>
        <end position="594"/>
    </location>
</feature>
<feature type="disulfide bond" evidence="2">
    <location>
        <begin position="596"/>
        <end position="605"/>
    </location>
</feature>
<feature type="disulfide bond" evidence="2">
    <location>
        <begin position="651"/>
        <end position="664"/>
    </location>
</feature>
<feature type="disulfide bond" evidence="2">
    <location>
        <begin position="666"/>
        <end position="675"/>
    </location>
</feature>
<feature type="disulfide bond" evidence="2">
    <location>
        <begin position="742"/>
        <end position="752"/>
    </location>
</feature>
<feature type="disulfide bond" evidence="2">
    <location>
        <begin position="746"/>
        <end position="762"/>
    </location>
</feature>
<feature type="disulfide bond" evidence="2">
    <location>
        <begin position="764"/>
        <end position="773"/>
    </location>
</feature>
<feature type="splice variant" id="VSP_054459" description="In isoform D." evidence="11">
    <original>G</original>
    <variation>GGRAMSTRLSVRGAGERGRRHRRSLNEEQGEDDVATDGTFSDLITNESLNQQAAEKYLATTLAKSPTDVHGSGNKTLPRMDGVYGTQRSEDTPDTSYDYVYEDEVEPETTPSLIRRTKTGQQFGKSLNSNLRSAAKTLVNKRRKYDHGTVEAEHIKHEEEEEEDEQKLERHEAIGMATELTTESETSTLPAVIDDDNQSDNSSSGPTPETTVRSDTDDIVEINTPPSQTAQRTFAAVSHQPAIEHDFQIKGTDAGGLQTEKPATDDINNERDLADNYEVDSKEPTSPGTPPQGKVSQQTGKASLQSLQSESDLMMNDASHYEDIDIVKLDGLTISHEEEIYKTADKENMAPKNQPSQHIDRSQNEVLKGHQQGDEKQPQLEPLKPYVSERVDLPGKRIFLNLTIATDEGSDSVYTLHVEVPTGGGPHFIKEVLTHEKPTAQADSCVPEPPPRMPDCPCSCLPPPAPIYLDDTVDIDSAPPAKTVTTSTISAPINPFHSEEEDDEDGVRDEEQTPSSSTATNLPSTEIDNHIAAFTEPAVGAGGVPFACPDVMPVLILE</variation>
    <location>
        <position position="375"/>
    </location>
</feature>
<feature type="splice variant" id="VSP_054460" description="In isoform D." evidence="11">
    <original>E</original>
    <variation>ESIFWNYFNA</variation>
    <location>
        <position position="858"/>
    </location>
</feature>
<feature type="sequence conflict" description="In Ref. 2; AAB88281/AAC05080." evidence="11" ref="2">
    <original>A</original>
    <variation>G</variation>
    <location>
        <position position="22"/>
    </location>
</feature>
<feature type="sequence conflict" description="In Ref. 2; AAB88281/AAC05080." evidence="11" ref="2">
    <original>G</original>
    <variation>S</variation>
    <location>
        <position position="37"/>
    </location>
</feature>
<feature type="sequence conflict" description="In Ref. 2; AAB88281." evidence="11" ref="2">
    <original>A</original>
    <variation>V</variation>
    <location>
        <position position="65"/>
    </location>
</feature>
<feature type="sequence conflict" description="In Ref. 2; AAB88281." evidence="11" ref="2">
    <original>A</original>
    <variation>V</variation>
    <location>
        <position position="89"/>
    </location>
</feature>
<feature type="sequence conflict" description="In Ref. 1; CAA51678." evidence="11" ref="1">
    <original>D</original>
    <variation>Y</variation>
    <location>
        <position position="1837"/>
    </location>
</feature>
<feature type="sequence conflict" description="In Ref. 2; AAB88281/AAC05080." evidence="11" ref="2">
    <original>A</original>
    <variation>G</variation>
    <location>
        <position position="2099"/>
    </location>
</feature>
<feature type="sequence conflict" description="In Ref. 2; AAB88281." evidence="11" ref="2">
    <original>A</original>
    <variation>T</variation>
    <location>
        <position position="2315"/>
    </location>
</feature>
<feature type="sequence conflict" description="In Ref. 1; CAA51678." evidence="11" ref="1">
    <original>M</original>
    <variation>T</variation>
    <location>
        <position position="2495"/>
    </location>
</feature>
<feature type="sequence conflict" description="In Ref. 2; AAB88281/AAC05080." evidence="11" ref="2">
    <original>K</original>
    <variation>R</variation>
    <location>
        <position position="2710"/>
    </location>
</feature>
<feature type="helix" evidence="12">
    <location>
        <begin position="834"/>
        <end position="838"/>
    </location>
</feature>
<feature type="helix" evidence="12">
    <location>
        <begin position="839"/>
        <end position="842"/>
    </location>
</feature>
<feature type="helix" evidence="12">
    <location>
        <begin position="848"/>
        <end position="851"/>
    </location>
</feature>
<feature type="turn" evidence="12">
    <location>
        <begin position="858"/>
        <end position="860"/>
    </location>
</feature>
<feature type="strand" evidence="12">
    <location>
        <begin position="861"/>
        <end position="869"/>
    </location>
</feature>
<feature type="strand" evidence="12">
    <location>
        <begin position="880"/>
        <end position="883"/>
    </location>
</feature>
<feature type="strand" evidence="12">
    <location>
        <begin position="890"/>
        <end position="892"/>
    </location>
</feature>
<feature type="strand" evidence="12">
    <location>
        <begin position="897"/>
        <end position="904"/>
    </location>
</feature>
<feature type="strand" evidence="12">
    <location>
        <begin position="906"/>
        <end position="914"/>
    </location>
</feature>
<feature type="strand" evidence="12">
    <location>
        <begin position="921"/>
        <end position="926"/>
    </location>
</feature>
<feature type="strand" evidence="12">
    <location>
        <begin position="932"/>
        <end position="934"/>
    </location>
</feature>
<feature type="turn" evidence="12">
    <location>
        <begin position="961"/>
        <end position="963"/>
    </location>
</feature>
<feature type="strand" evidence="12">
    <location>
        <begin position="967"/>
        <end position="970"/>
    </location>
</feature>
<feature type="helix" evidence="12">
    <location>
        <begin position="971"/>
        <end position="974"/>
    </location>
</feature>
<feature type="strand" evidence="12">
    <location>
        <begin position="985"/>
        <end position="987"/>
    </location>
</feature>
<feature type="turn" evidence="12">
    <location>
        <begin position="988"/>
        <end position="991"/>
    </location>
</feature>
<feature type="strand" evidence="12">
    <location>
        <begin position="992"/>
        <end position="998"/>
    </location>
</feature>
<feature type="strand" evidence="12">
    <location>
        <begin position="1005"/>
        <end position="1009"/>
    </location>
</feature>
<feature type="helix" evidence="12">
    <location>
        <begin position="1010"/>
        <end position="1012"/>
    </location>
</feature>
<feature type="strand" evidence="12">
    <location>
        <begin position="1018"/>
        <end position="1023"/>
    </location>
</feature>
<feature type="strand" evidence="12">
    <location>
        <begin position="1033"/>
        <end position="1042"/>
    </location>
</feature>
<feature type="strand" evidence="12">
    <location>
        <begin position="1045"/>
        <end position="1053"/>
    </location>
</feature>
<feature type="strand" evidence="12">
    <location>
        <begin position="1058"/>
        <end position="1063"/>
    </location>
</feature>
<feature type="strand" evidence="12">
    <location>
        <begin position="1077"/>
        <end position="1089"/>
    </location>
</feature>
<feature type="strand" evidence="12">
    <location>
        <begin position="1094"/>
        <end position="1102"/>
    </location>
</feature>
<feature type="strand" evidence="12">
    <location>
        <begin position="1112"/>
        <end position="1114"/>
    </location>
</feature>
<feature type="strand" evidence="12">
    <location>
        <begin position="1121"/>
        <end position="1124"/>
    </location>
</feature>
<feature type="turn" evidence="12">
    <location>
        <begin position="1125"/>
        <end position="1128"/>
    </location>
</feature>
<feature type="strand" evidence="12">
    <location>
        <begin position="1129"/>
        <end position="1132"/>
    </location>
</feature>
<feature type="strand" evidence="12">
    <location>
        <begin position="1137"/>
        <end position="1139"/>
    </location>
</feature>
<feature type="helix" evidence="12">
    <location>
        <begin position="1140"/>
        <end position="1142"/>
    </location>
</feature>
<feature type="strand" evidence="12">
    <location>
        <begin position="1146"/>
        <end position="1151"/>
    </location>
</feature>
<feature type="strand" evidence="12">
    <location>
        <begin position="1154"/>
        <end position="1156"/>
    </location>
</feature>
<feature type="helix" evidence="12">
    <location>
        <begin position="1168"/>
        <end position="1170"/>
    </location>
</feature>
<feature type="strand" evidence="12">
    <location>
        <begin position="1176"/>
        <end position="1181"/>
    </location>
</feature>
<feature type="strand" evidence="12">
    <location>
        <begin position="1187"/>
        <end position="1191"/>
    </location>
</feature>
<feature type="strand" evidence="12">
    <location>
        <begin position="1194"/>
        <end position="1198"/>
    </location>
</feature>
<feature type="strand" evidence="12">
    <location>
        <begin position="1202"/>
        <end position="1209"/>
    </location>
</feature>
<feature type="strand" evidence="12">
    <location>
        <begin position="1220"/>
        <end position="1223"/>
    </location>
</feature>
<feature type="turn" evidence="12">
    <location>
        <begin position="1225"/>
        <end position="1227"/>
    </location>
</feature>
<feature type="strand" evidence="12">
    <location>
        <begin position="1230"/>
        <end position="1234"/>
    </location>
</feature>
<feature type="turn" evidence="12">
    <location>
        <begin position="1235"/>
        <end position="1238"/>
    </location>
</feature>
<feature type="strand" evidence="12">
    <location>
        <begin position="1239"/>
        <end position="1242"/>
    </location>
</feature>
<feature type="turn" evidence="12">
    <location>
        <begin position="1252"/>
        <end position="1254"/>
    </location>
</feature>
<feature type="strand" evidence="12">
    <location>
        <begin position="1257"/>
        <end position="1260"/>
    </location>
</feature>
<feature type="turn" evidence="12">
    <location>
        <begin position="1272"/>
        <end position="1277"/>
    </location>
</feature>
<feature type="strand" evidence="12">
    <location>
        <begin position="1278"/>
        <end position="1282"/>
    </location>
</feature>
<feature type="strand" evidence="12">
    <location>
        <begin position="1286"/>
        <end position="1293"/>
    </location>
</feature>
<feature type="strand" evidence="12">
    <location>
        <begin position="1299"/>
        <end position="1303"/>
    </location>
</feature>
<feature type="strand" evidence="12">
    <location>
        <begin position="1306"/>
        <end position="1310"/>
    </location>
</feature>
<feature type="strand" evidence="12">
    <location>
        <begin position="1315"/>
        <end position="1320"/>
    </location>
</feature>
<feature type="strand" evidence="12">
    <location>
        <begin position="1334"/>
        <end position="1338"/>
    </location>
</feature>
<feature type="turn" evidence="12">
    <location>
        <begin position="1340"/>
        <end position="1342"/>
    </location>
</feature>
<feature type="strand" evidence="12">
    <location>
        <begin position="1351"/>
        <end position="1353"/>
    </location>
</feature>
<feature type="turn" evidence="12">
    <location>
        <begin position="1355"/>
        <end position="1357"/>
    </location>
</feature>
<feature type="strand" evidence="12">
    <location>
        <begin position="1360"/>
        <end position="1364"/>
    </location>
</feature>
<feature type="strand" evidence="12">
    <location>
        <begin position="1367"/>
        <end position="1372"/>
    </location>
</feature>
<feature type="turn" evidence="12">
    <location>
        <begin position="1373"/>
        <end position="1375"/>
    </location>
</feature>
<feature type="strand" evidence="12">
    <location>
        <begin position="1376"/>
        <end position="1381"/>
    </location>
</feature>
<feature type="helix" evidence="12">
    <location>
        <begin position="1399"/>
        <end position="1401"/>
    </location>
</feature>
<feature type="strand" evidence="12">
    <location>
        <begin position="1405"/>
        <end position="1412"/>
    </location>
</feature>
<feature type="strand" evidence="12">
    <location>
        <begin position="1418"/>
        <end position="1423"/>
    </location>
</feature>
<feature type="strand" evidence="12">
    <location>
        <begin position="1425"/>
        <end position="1427"/>
    </location>
</feature>
<feature type="strand" evidence="12">
    <location>
        <begin position="1429"/>
        <end position="1434"/>
    </location>
</feature>
<feature type="strand" evidence="12">
    <location>
        <begin position="1438"/>
        <end position="1444"/>
    </location>
</feature>
<feature type="turn" evidence="12">
    <location>
        <begin position="1467"/>
        <end position="1469"/>
    </location>
</feature>
<feature type="strand" evidence="12">
    <location>
        <begin position="1473"/>
        <end position="1480"/>
    </location>
</feature>
<feature type="strand" evidence="12">
    <location>
        <begin position="1486"/>
        <end position="1490"/>
    </location>
</feature>
<feature type="helix" evidence="12">
    <location>
        <begin position="1491"/>
        <end position="1493"/>
    </location>
</feature>
<feature type="strand" evidence="12">
    <location>
        <begin position="1495"/>
        <end position="1500"/>
    </location>
</feature>
<feature type="strand" evidence="12">
    <location>
        <begin position="1512"/>
        <end position="1516"/>
    </location>
</feature>
<feature type="turn" evidence="12">
    <location>
        <begin position="1517"/>
        <end position="1520"/>
    </location>
</feature>
<feature type="strand" evidence="12">
    <location>
        <begin position="1521"/>
        <end position="1525"/>
    </location>
</feature>
<feature type="strand" evidence="12">
    <location>
        <begin position="1529"/>
        <end position="1536"/>
    </location>
</feature>
<feature type="turn" evidence="12">
    <location>
        <begin position="1537"/>
        <end position="1539"/>
    </location>
</feature>
<feature type="strand" evidence="12">
    <location>
        <begin position="1542"/>
        <end position="1552"/>
    </location>
</feature>
<feature type="strand" evidence="12">
    <location>
        <begin position="1557"/>
        <end position="1561"/>
    </location>
</feature>
<feature type="strand" evidence="12">
    <location>
        <begin position="1563"/>
        <end position="1565"/>
    </location>
</feature>
<feature type="strand" evidence="12">
    <location>
        <begin position="1567"/>
        <end position="1572"/>
    </location>
</feature>
<feature type="strand" evidence="12">
    <location>
        <begin position="1578"/>
        <end position="1582"/>
    </location>
</feature>
<feature type="strand" evidence="12">
    <location>
        <begin position="1588"/>
        <end position="1593"/>
    </location>
</feature>
<feature type="strand" evidence="12">
    <location>
        <begin position="1599"/>
        <end position="1603"/>
    </location>
</feature>
<feature type="strand" evidence="12">
    <location>
        <begin position="1609"/>
        <end position="1615"/>
    </location>
</feature>
<feature type="strand" evidence="12">
    <location>
        <begin position="1621"/>
        <end position="1626"/>
    </location>
</feature>
<feature type="strand" evidence="12">
    <location>
        <begin position="1631"/>
        <end position="1636"/>
    </location>
</feature>
<feature type="strand" evidence="12">
    <location>
        <begin position="1642"/>
        <end position="1646"/>
    </location>
</feature>
<feature type="strand" evidence="12">
    <location>
        <begin position="1652"/>
        <end position="1660"/>
    </location>
</feature>
<feature type="strand" evidence="12">
    <location>
        <begin position="1663"/>
        <end position="1670"/>
    </location>
</feature>
<feature type="strand" evidence="12">
    <location>
        <begin position="1673"/>
        <end position="1681"/>
    </location>
</feature>
<feature type="strand" evidence="12">
    <location>
        <begin position="1684"/>
        <end position="1689"/>
    </location>
</feature>
<feature type="strand" evidence="12">
    <location>
        <begin position="1692"/>
        <end position="1698"/>
    </location>
</feature>
<feature type="strand" evidence="12">
    <location>
        <begin position="1704"/>
        <end position="1707"/>
    </location>
</feature>
<feature type="strand" evidence="12">
    <location>
        <begin position="1711"/>
        <end position="1719"/>
    </location>
</feature>
<feature type="helix" evidence="12">
    <location>
        <begin position="1722"/>
        <end position="1725"/>
    </location>
</feature>
<feature type="helix" evidence="12">
    <location>
        <begin position="1729"/>
        <end position="1734"/>
    </location>
</feature>
<feature type="strand" evidence="12">
    <location>
        <begin position="1737"/>
        <end position="1745"/>
    </location>
</feature>
<feature type="strand" evidence="12">
    <location>
        <begin position="1748"/>
        <end position="1761"/>
    </location>
</feature>
<feature type="strand" evidence="12">
    <location>
        <begin position="1778"/>
        <end position="1787"/>
    </location>
</feature>
<feature type="strand" evidence="12">
    <location>
        <begin position="1790"/>
        <end position="1798"/>
    </location>
</feature>
<feature type="turn" evidence="12">
    <location>
        <begin position="1799"/>
        <end position="1802"/>
    </location>
</feature>
<feature type="strand" evidence="12">
    <location>
        <begin position="1803"/>
        <end position="1808"/>
    </location>
</feature>
<feature type="turn" evidence="12">
    <location>
        <begin position="1809"/>
        <end position="1811"/>
    </location>
</feature>
<feature type="strand" evidence="12">
    <location>
        <begin position="1812"/>
        <end position="1819"/>
    </location>
</feature>
<feature type="strand" evidence="12">
    <location>
        <begin position="1825"/>
        <end position="1830"/>
    </location>
</feature>
<feature type="strand" evidence="12">
    <location>
        <begin position="1832"/>
        <end position="1834"/>
    </location>
</feature>
<feature type="strand" evidence="12">
    <location>
        <begin position="1838"/>
        <end position="1842"/>
    </location>
</feature>
<feature type="strand" evidence="12">
    <location>
        <begin position="1848"/>
        <end position="1853"/>
    </location>
</feature>
<feature type="strand" evidence="12">
    <location>
        <begin position="1856"/>
        <end position="1862"/>
    </location>
</feature>
<feature type="strand" evidence="12">
    <location>
        <begin position="1868"/>
        <end position="1873"/>
    </location>
</feature>
<feature type="strand" evidence="12">
    <location>
        <begin position="1878"/>
        <end position="1882"/>
    </location>
</feature>
<feature type="strand" evidence="12">
    <location>
        <begin position="1892"/>
        <end position="1895"/>
    </location>
</feature>
<feature type="strand" evidence="12">
    <location>
        <begin position="1901"/>
        <end position="1906"/>
    </location>
</feature>
<feature type="strand" evidence="12">
    <location>
        <begin position="1912"/>
        <end position="1916"/>
    </location>
</feature>
<feature type="strand" evidence="12">
    <location>
        <begin position="1922"/>
        <end position="1929"/>
    </location>
</feature>
<feature type="strand" evidence="12">
    <location>
        <begin position="1931"/>
        <end position="1939"/>
    </location>
</feature>
<feature type="turn" evidence="12">
    <location>
        <begin position="1941"/>
        <end position="1943"/>
    </location>
</feature>
<feature type="strand" evidence="12">
    <location>
        <begin position="1947"/>
        <end position="1951"/>
    </location>
</feature>
<feature type="strand" evidence="12">
    <location>
        <begin position="1956"/>
        <end position="1961"/>
    </location>
</feature>
<feature type="helix" evidence="12">
    <location>
        <begin position="1963"/>
        <end position="1965"/>
    </location>
</feature>
<feature type="strand" evidence="12">
    <location>
        <begin position="1968"/>
        <end position="1973"/>
    </location>
</feature>
<feature type="strand" evidence="12">
    <location>
        <begin position="1979"/>
        <end position="1984"/>
    </location>
</feature>
<feature type="strand" evidence="12">
    <location>
        <begin position="1987"/>
        <end position="1993"/>
    </location>
</feature>
<feature type="turn" evidence="12">
    <location>
        <begin position="1995"/>
        <end position="1997"/>
    </location>
</feature>
<feature type="strand" evidence="12">
    <location>
        <begin position="2000"/>
        <end position="2007"/>
    </location>
</feature>
<feature type="strand" evidence="12">
    <location>
        <begin position="2010"/>
        <end position="2019"/>
    </location>
</feature>
<feature type="strand" evidence="12">
    <location>
        <begin position="2022"/>
        <end position="2030"/>
    </location>
</feature>
<feature type="strand" evidence="12">
    <location>
        <begin position="2039"/>
        <end position="2045"/>
    </location>
</feature>
<feature type="strand" evidence="12">
    <location>
        <begin position="2051"/>
        <end position="2058"/>
    </location>
</feature>
<feature type="strand" evidence="12">
    <location>
        <begin position="2066"/>
        <end position="2070"/>
    </location>
</feature>
<feature type="turn" evidence="12">
    <location>
        <begin position="2072"/>
        <end position="2074"/>
    </location>
</feature>
<feature type="strand" evidence="12">
    <location>
        <begin position="2077"/>
        <end position="2080"/>
    </location>
</feature>
<feature type="strand" evidence="12">
    <location>
        <begin position="2083"/>
        <end position="2088"/>
    </location>
</feature>
<feature type="turn" evidence="12">
    <location>
        <begin position="2089"/>
        <end position="2091"/>
    </location>
</feature>
<feature type="strand" evidence="12">
    <location>
        <begin position="2092"/>
        <end position="2097"/>
    </location>
</feature>
<feature type="strand" evidence="12">
    <location>
        <begin position="2102"/>
        <end position="2108"/>
    </location>
</feature>
<feature type="strand" evidence="12">
    <location>
        <begin position="2114"/>
        <end position="2121"/>
    </location>
</feature>
<feature type="strand" evidence="12">
    <location>
        <begin position="2124"/>
        <end position="2133"/>
    </location>
</feature>
<feature type="strand" evidence="12">
    <location>
        <begin position="2139"/>
        <end position="2146"/>
    </location>
</feature>
<feature type="strand" evidence="12">
    <location>
        <begin position="2149"/>
        <end position="2157"/>
    </location>
</feature>
<feature type="strand" evidence="12">
    <location>
        <begin position="2163"/>
        <end position="2176"/>
    </location>
</feature>
<feature type="strand" evidence="12">
    <location>
        <begin position="2182"/>
        <end position="2187"/>
    </location>
</feature>
<feature type="strand" evidence="12">
    <location>
        <begin position="2190"/>
        <end position="2196"/>
    </location>
</feature>
<feature type="strand" evidence="12">
    <location>
        <begin position="2202"/>
        <end position="2205"/>
    </location>
</feature>
<feature type="strand" evidence="12">
    <location>
        <begin position="2211"/>
        <end position="2213"/>
    </location>
</feature>
<feature type="strand" evidence="12">
    <location>
        <begin position="2219"/>
        <end position="2222"/>
    </location>
</feature>
<feature type="strand" evidence="12">
    <location>
        <begin position="2225"/>
        <end position="2229"/>
    </location>
</feature>
<feature type="strand" evidence="12">
    <location>
        <begin position="2235"/>
        <end position="2240"/>
    </location>
</feature>
<feature type="turn" evidence="12">
    <location>
        <begin position="2241"/>
        <end position="2243"/>
    </location>
</feature>
<feature type="strand" evidence="12">
    <location>
        <begin position="2244"/>
        <end position="2250"/>
    </location>
</feature>
<feature type="strand" evidence="12">
    <location>
        <begin position="2256"/>
        <end position="2261"/>
    </location>
</feature>
<feature type="strand" evidence="12">
    <location>
        <begin position="2266"/>
        <end position="2270"/>
    </location>
</feature>
<feature type="strand" evidence="12">
    <location>
        <begin position="2274"/>
        <end position="2276"/>
    </location>
</feature>
<feature type="strand" evidence="12">
    <location>
        <begin position="2282"/>
        <end position="2285"/>
    </location>
</feature>
<feature type="turn" evidence="12">
    <location>
        <begin position="2286"/>
        <end position="2289"/>
    </location>
</feature>
<feature type="strand" evidence="12">
    <location>
        <begin position="2290"/>
        <end position="2296"/>
    </location>
</feature>
<feature type="strand" evidence="12">
    <location>
        <begin position="2302"/>
        <end position="2307"/>
    </location>
</feature>
<feature type="strand" evidence="12">
    <location>
        <begin position="2310"/>
        <end position="2316"/>
    </location>
</feature>
<feature type="strand" evidence="12">
    <location>
        <begin position="2322"/>
        <end position="2326"/>
    </location>
</feature>
<feature type="strand" evidence="12">
    <location>
        <begin position="2332"/>
        <end position="2338"/>
    </location>
</feature>
<feature type="strand" evidence="12">
    <location>
        <begin position="2344"/>
        <end position="2348"/>
    </location>
</feature>
<feature type="helix" evidence="12">
    <location>
        <begin position="2358"/>
        <end position="2360"/>
    </location>
</feature>
<feature type="turn" evidence="12">
    <location>
        <begin position="2365"/>
        <end position="2367"/>
    </location>
</feature>
<feature type="strand" evidence="12">
    <location>
        <begin position="2370"/>
        <end position="2372"/>
    </location>
</feature>
<feature type="strand" evidence="12">
    <location>
        <begin position="2375"/>
        <end position="2378"/>
    </location>
</feature>
<feature type="turn" evidence="12">
    <location>
        <begin position="2379"/>
        <end position="2382"/>
    </location>
</feature>
<feature type="strand" evidence="12">
    <location>
        <begin position="2383"/>
        <end position="2386"/>
    </location>
</feature>
<feature type="helix" evidence="12">
    <location>
        <begin position="2391"/>
        <end position="2394"/>
    </location>
</feature>
<feature type="helix" evidence="12">
    <location>
        <begin position="2399"/>
        <end position="2402"/>
    </location>
</feature>
<feature type="helix" evidence="12">
    <location>
        <begin position="2408"/>
        <end position="2410"/>
    </location>
</feature>
<feature type="helix" evidence="12">
    <location>
        <begin position="2425"/>
        <end position="2431"/>
    </location>
</feature>
<feature type="helix" evidence="12">
    <location>
        <begin position="2436"/>
        <end position="2438"/>
    </location>
</feature>
<feature type="helix" evidence="12">
    <location>
        <begin position="2441"/>
        <end position="2447"/>
    </location>
</feature>
<feature type="strand" evidence="12">
    <location>
        <begin position="2455"/>
        <end position="2457"/>
    </location>
</feature>
<feature type="helix" evidence="12">
    <location>
        <begin position="2470"/>
        <end position="2483"/>
    </location>
</feature>
<feature type="strand" evidence="12">
    <location>
        <begin position="2515"/>
        <end position="2522"/>
    </location>
</feature>
<feature type="strand" evidence="12">
    <location>
        <begin position="2525"/>
        <end position="2530"/>
    </location>
</feature>
<feature type="helix" evidence="12">
    <location>
        <begin position="2538"/>
        <end position="2546"/>
    </location>
</feature>
<feature type="strand" evidence="12">
    <location>
        <begin position="2555"/>
        <end position="2558"/>
    </location>
</feature>
<feature type="strand" evidence="12">
    <location>
        <begin position="2561"/>
        <end position="2568"/>
    </location>
</feature>
<feature type="helix" evidence="12">
    <location>
        <begin position="2573"/>
        <end position="2581"/>
    </location>
</feature>
<feature type="strand" evidence="12">
    <location>
        <begin position="2589"/>
        <end position="2592"/>
    </location>
</feature>
<feature type="strand" evidence="12">
    <location>
        <begin position="2606"/>
        <end position="2609"/>
    </location>
</feature>
<feature type="strand" evidence="12">
    <location>
        <begin position="2611"/>
        <end position="2621"/>
    </location>
</feature>
<feature type="helix" evidence="12">
    <location>
        <begin position="2623"/>
        <end position="2634"/>
    </location>
</feature>
<feature type="turn" evidence="12">
    <location>
        <begin position="2685"/>
        <end position="2687"/>
    </location>
</feature>
<feature type="turn" evidence="12">
    <location>
        <begin position="2689"/>
        <end position="2693"/>
    </location>
</feature>
<keyword id="KW-0002">3D-structure</keyword>
<keyword id="KW-0025">Alternative splicing</keyword>
<keyword id="KW-0130">Cell adhesion</keyword>
<keyword id="KW-1003">Cell membrane</keyword>
<keyword id="KW-0963">Cytoplasm</keyword>
<keyword id="KW-0217">Developmental protein</keyword>
<keyword id="KW-1015">Disulfide bond</keyword>
<keyword id="KW-0245">EGF-like domain</keyword>
<keyword id="KW-0325">Glycoprotein</keyword>
<keyword id="KW-0472">Membrane</keyword>
<keyword id="KW-0524">Neurogenesis</keyword>
<keyword id="KW-0628">Postsynaptic cell membrane</keyword>
<keyword id="KW-1185">Reference proteome</keyword>
<keyword id="KW-0677">Repeat</keyword>
<keyword id="KW-0770">Synapse</keyword>
<keyword id="KW-0771">Synaptosome</keyword>
<keyword id="KW-0812">Transmembrane</keyword>
<keyword id="KW-1133">Transmembrane helix</keyword>
<name>TENM_DROME</name>
<sequence>MNPYEYESTLDCRDVGGGPTPAHAHPHAQGRTLPMSGHGRPTTDLGPVHGSQTLQHQNQQNLQAAQAAAQSSHYDYEYQHLAHRPPDTANNTAQRTHGRQGFLLEGVTPTAPPDVPPRNPTMSRMQNGRLTVNNPNDADFEPSCLVRTPSGNVYIPSGNLNINKGSPIDFKSGSACSTPTKDTLKGYERSTQGCMGPVLPQRSVMNGLPAHHYSAPMNFRKDLVARCSSPWFGIGSISVLFAFVVMLILLTTTGVIKWNQSPPCSVLVGNEASEVTAAKSTNTDLSKLHNSSVRAKNGQGIGLAQGQSGLGAAGVGSGGGSSAATVTTATSNSGTAQGLQSTSASAEATSSAATSSSQSSLTPSLSSSLANANNGGARTFPARSFPPDGTTFGQITLGQKLTKEIQPYSYWNMQFYQSEPAYVKFDYTIPRGASIGVYGRRNALPTHTQYHFKEVLSGFSASTRTARAAHLSITREVTRYMEPGHWFVSLYNDDGDVQELTFYAAVAEDMTQNCPNGCSGNGQCLLGHCQCNPGFGGDDCSESVCPVLCSQHGEYTNGECICNPGWKGKECSLRHDECEVADCSGHGHCVSGKCQCMRGYKGKFCEEVDCPHPNCSGHGFCADGTCICKKGWKGPDCATMDQDALQCLPDCSGHGTFDLDTQTCTCEAKWSGDDCSKELCDLDCGQHGRCEGDACACDPEWGGEYCNTRLCDVRCNEHGQCKNGTCLCVTGWNGKHCTIEGCPNSCAGHGQCRVSGEGQWECRCYEGWDGPDCGIALELNCGDSKDNDKDGLVDCEDPECCASHVCKTSQLCVSAPKPIDVLLRKQPPAITASFFERMKFLIDESSLQNYAKLETFNESRSAVIRGRVVTSLGMGLVGVRVSTTTLLEGFTLTRDDGWFDLMVNGGGAVTLQFGRAPFRPQSRIVQVPWNEVVIIDLVVMSMSEEKGLAVTTTHTCFAHDYDLMKPVVLASWKHGFQGACPDRSAILAESQVIQESLQIPGTGLNLVYHSSRAAGYLSTIKLQLTPDVIPTSLHLIHLRITIEGILFERIFEADPGIKFTYAWNRLNIYRQRVYGVTTAVVKVGYQYTDCTDIVWDIQTTKLSGHDMSISEVGGWNLDIHHRYNFHEGILQKGDGSNIYLRNKPRIILTTMGDGHQRPLECPDCDGQATKQRLLAPVALAAAPDGSLFVGDFNYIRRIMTDGSIRTVVKLNATRVSYRYHMALSPLDGTLYVSDPESHQIIRVRDTNDYSQPELNWEAVVGSGERCLPGDEAHCGDGALAKDAKLAYPKGIAISSDNILYFADGTNIRMVDRDGIVSTLIGNHMHKSHWKPIPCEGTLKLEEMHLRWPTELAVSPMDNTLHIIDDHMILRMTPDGRVRVISGRPLHCATASTAYDTDLATHATLVMPQSIAFGPLGELYVAESDSQRINRVRVIGTDGRIAPFAGAESKCNCLERGCDCFEAEHYLATSAKFNTIAALAVTPDSHVHIADQANYRIRSVMSSIPEASPSREYEIYAPDMQEIYIFNRFGQHVSTRNILTGETTYVFTYNVNTSNGKLSTVTDAAGNKVFLLRDYTSQVNSIENTKGQKCRLRMTRMKMLHELSTPDNYNVTYEYHGPTGLLRTKLDSTGRSYVYNYDEFGRLTSAVTPTGRVIELSFDLSVKGAQVKVSENAQKEMSLLIQGATVIVRNGAAESRTTVDMDGSTTSITPWGHNLQMEVAPYTILAEQSPLLGESYPVPAKQRTEIAGDLANRFEWRYFVRRQQPLQAGKQSKGPPRPVTEVGRKLRVNGDNVLTLEYDRETQSVVVMVDDKQELLNVTYDRTSRPISFRPQSGDYADVDLEYDRFGRLVSWKWGVLQEAYSFDRNGRLNEIKYGDGSTMVYAFKDMFGSLPLKVTTPRRSDYLLQYDDAGALQSLTTPRGHIHAFSLQTSLGFFKYQYYSPINRHPFEILYNDEGQILAKIHPHQSGKVAFVHDTAGRLETILAGLSSTHYTYQDTTSLVKSVEVQEPGFELRREFKYHAGILKDEKLRFGSKNSLASARYKYAYDGNARLSGIEMAIDDKELPTTRYKYSQNLGQLEVVQDLKITRNAFNRTVIQDSAKQFFAIVDYDQHGRVKSVLMNVKNIDVFRLELDYDLRNRIKSQKTTFGRSTAFDKINYNADGHVVEVLGTNNWKYLFDENGNTVGVVDQGEKFNLGYDIGDRVIKVGDVEFNNYDARGFVVKRGEQKYRYNNRGQLIHSFERERFQSWYYYDDRSRLVAWHDNKGNTTQYYYANPRTPHLVTHVHFPKISRTMKLFYDDRDMLIALEHEDQRYYVATDQNGSPLAFFDQNGSIVKEMKRTPFGRIIKDTKPEFFVPIDFHGGLIDPHTKLVYTEQRQYDPHVGQWMTPLWETLATEMSHPTDVFIYRYHNNDPINPNKPQNYMIDLDSWLQLFGYDLNNMQSSRYTKLAQYTPQASIKSNTLAPDFGVISGLECIVEKTSEKFSDFDFVPKPLLKMEPKMRNLLPRVSYRRGVFGEGVLLSRIGGRALVSVVDGSNSVVQDVVSSVFNNSYFLDLHFSIHDQDVFYFVKDNVLKLRDDNEELRRLGGMFNISTHEISDHGGSAAKELRLHGPDAVVIIKYGVDPEQERHRILKHAHKRAVERAWELEKQLVAAGFQGRGDWTEEEKEELVQHGDVDGWNGIDIHSIHKYPQLADDPGNVAFQRDAKRKRRKTGSSHRSASNRRQLKFGELSA</sequence>
<proteinExistence type="evidence at protein level"/>
<accession>O61307</accession>
<accession>A8JNW8</accession>
<accession>O18366</accession>
<accession>Q24551</accession>
<accession>Q9TX59</accession>
<accession>Q9VNU6</accession>
<dbReference type="EMBL" id="X73154">
    <property type="protein sequence ID" value="CAA51678.1"/>
    <property type="status" value="ALT_INIT"/>
    <property type="molecule type" value="mRNA"/>
</dbReference>
<dbReference type="EMBL" id="AF008227">
    <property type="protein sequence ID" value="AAC05080.1"/>
    <property type="molecule type" value="Genomic_DNA"/>
</dbReference>
<dbReference type="EMBL" id="AF008224">
    <property type="protein sequence ID" value="AAC05080.1"/>
    <property type="status" value="JOINED"/>
    <property type="molecule type" value="Genomic_DNA"/>
</dbReference>
<dbReference type="EMBL" id="AF008226">
    <property type="protein sequence ID" value="AAC05080.1"/>
    <property type="status" value="JOINED"/>
    <property type="molecule type" value="Genomic_DNA"/>
</dbReference>
<dbReference type="EMBL" id="AF008228">
    <property type="protein sequence ID" value="AAB88281.1"/>
    <property type="molecule type" value="mRNA"/>
</dbReference>
<dbReference type="EMBL" id="AE014296">
    <property type="protein sequence ID" value="AAF51824.2"/>
    <property type="molecule type" value="Genomic_DNA"/>
</dbReference>
<dbReference type="EMBL" id="AE014296">
    <property type="protein sequence ID" value="ABW08579.2"/>
    <property type="molecule type" value="Genomic_DNA"/>
</dbReference>
<dbReference type="RefSeq" id="NP_001097661.2">
    <molecule id="O61307-2"/>
    <property type="nucleotide sequence ID" value="NM_001104191.3"/>
</dbReference>
<dbReference type="RefSeq" id="NP_524215.2">
    <molecule id="O61307-1"/>
    <property type="nucleotide sequence ID" value="NM_079491.3"/>
</dbReference>
<dbReference type="PDB" id="8FIA">
    <property type="method" value="X-ray"/>
    <property type="resolution" value="2.40 A"/>
    <property type="chains" value="A=779-2731"/>
</dbReference>
<dbReference type="PDBsum" id="8FIA"/>
<dbReference type="SMR" id="O61307"/>
<dbReference type="BioGRID" id="65699">
    <property type="interactions" value="12"/>
</dbReference>
<dbReference type="FunCoup" id="O61307">
    <property type="interactions" value="240"/>
</dbReference>
<dbReference type="IntAct" id="O61307">
    <property type="interactions" value="704"/>
</dbReference>
<dbReference type="STRING" id="7227.FBpp0303192"/>
<dbReference type="GlyCosmos" id="O61307">
    <property type="glycosylation" value="1 site, No reported glycans"/>
</dbReference>
<dbReference type="GlyGen" id="O61307">
    <property type="glycosylation" value="4 sites"/>
</dbReference>
<dbReference type="iPTMnet" id="O61307"/>
<dbReference type="PeptideAtlas" id="O61307"/>
<dbReference type="EnsemblMetazoa" id="FBtr0078509">
    <molecule id="O61307-1"/>
    <property type="protein sequence ID" value="FBpp0078161"/>
    <property type="gene ID" value="FBgn0004449"/>
</dbReference>
<dbReference type="EnsemblMetazoa" id="FBtr0306107">
    <molecule id="O61307-2"/>
    <property type="protein sequence ID" value="FBpp0297244"/>
    <property type="gene ID" value="FBgn0004449"/>
</dbReference>
<dbReference type="GeneID" id="40464"/>
<dbReference type="KEGG" id="dme:Dmel_CG5723"/>
<dbReference type="UCSC" id="CG5723-RB">
    <property type="organism name" value="d. melanogaster"/>
</dbReference>
<dbReference type="UCSC" id="CG5723-RC">
    <property type="organism name" value="d. melanogaster"/>
</dbReference>
<dbReference type="AGR" id="FB:FBgn0004449"/>
<dbReference type="CTD" id="40464"/>
<dbReference type="FlyBase" id="FBgn0004449">
    <property type="gene designation" value="Ten-m"/>
</dbReference>
<dbReference type="VEuPathDB" id="VectorBase:FBgn0004449"/>
<dbReference type="eggNOG" id="KOG1225">
    <property type="taxonomic scope" value="Eukaryota"/>
</dbReference>
<dbReference type="eggNOG" id="KOG4659">
    <property type="taxonomic scope" value="Eukaryota"/>
</dbReference>
<dbReference type="GeneTree" id="ENSGT01030000234566"/>
<dbReference type="HOGENOM" id="CLU_000229_1_0_1"/>
<dbReference type="InParanoid" id="O61307"/>
<dbReference type="OMA" id="HWTQSAP"/>
<dbReference type="OrthoDB" id="442731at2759"/>
<dbReference type="SignaLink" id="O61307"/>
<dbReference type="BioGRID-ORCS" id="40464">
    <property type="hits" value="0 hits in 3 CRISPR screens"/>
</dbReference>
<dbReference type="ChiTaRS" id="Ten-m">
    <property type="organism name" value="fly"/>
</dbReference>
<dbReference type="GenomeRNAi" id="40464"/>
<dbReference type="PRO" id="PR:O61307"/>
<dbReference type="Proteomes" id="UP000000803">
    <property type="component" value="Chromosome 3L"/>
</dbReference>
<dbReference type="Bgee" id="FBgn0004449">
    <property type="expression patterns" value="Expressed in hemocyte (sensu Nematoda and Protostomia) in post-embryonic organism and 246 other cell types or tissues"/>
</dbReference>
<dbReference type="ExpressionAtlas" id="O61307">
    <property type="expression patterns" value="baseline and differential"/>
</dbReference>
<dbReference type="GO" id="GO:0005737">
    <property type="term" value="C:cytoplasm"/>
    <property type="evidence" value="ECO:0007669"/>
    <property type="project" value="UniProtKB-SubCell"/>
</dbReference>
<dbReference type="GO" id="GO:0031012">
    <property type="term" value="C:extracellular matrix"/>
    <property type="evidence" value="ECO:0000250"/>
    <property type="project" value="FlyBase"/>
</dbReference>
<dbReference type="GO" id="GO:0031594">
    <property type="term" value="C:neuromuscular junction"/>
    <property type="evidence" value="ECO:0000314"/>
    <property type="project" value="FlyBase"/>
</dbReference>
<dbReference type="GO" id="GO:0043005">
    <property type="term" value="C:neuron projection"/>
    <property type="evidence" value="ECO:0007669"/>
    <property type="project" value="UniProtKB-KW"/>
</dbReference>
<dbReference type="GO" id="GO:0043025">
    <property type="term" value="C:neuronal cell body"/>
    <property type="evidence" value="ECO:0000314"/>
    <property type="project" value="UniProtKB"/>
</dbReference>
<dbReference type="GO" id="GO:0005886">
    <property type="term" value="C:plasma membrane"/>
    <property type="evidence" value="ECO:0000314"/>
    <property type="project" value="FlyBase"/>
</dbReference>
<dbReference type="GO" id="GO:0045211">
    <property type="term" value="C:postsynaptic membrane"/>
    <property type="evidence" value="ECO:0000314"/>
    <property type="project" value="UniProtKB"/>
</dbReference>
<dbReference type="GO" id="GO:0031005">
    <property type="term" value="F:filamin binding"/>
    <property type="evidence" value="ECO:0000314"/>
    <property type="project" value="FlyBase"/>
</dbReference>
<dbReference type="GO" id="GO:0042802">
    <property type="term" value="F:identical protein binding"/>
    <property type="evidence" value="ECO:0000314"/>
    <property type="project" value="FlyBase"/>
</dbReference>
<dbReference type="GO" id="GO:0046982">
    <property type="term" value="F:protein heterodimerization activity"/>
    <property type="evidence" value="ECO:0000314"/>
    <property type="project" value="UniProtKB"/>
</dbReference>
<dbReference type="GO" id="GO:0042803">
    <property type="term" value="F:protein homodimerization activity"/>
    <property type="evidence" value="ECO:0000314"/>
    <property type="project" value="UniProtKB"/>
</dbReference>
<dbReference type="GO" id="GO:0007155">
    <property type="term" value="P:cell adhesion"/>
    <property type="evidence" value="ECO:0007669"/>
    <property type="project" value="UniProtKB-KW"/>
</dbReference>
<dbReference type="GO" id="GO:0022416">
    <property type="term" value="P:chaeta development"/>
    <property type="evidence" value="ECO:0000315"/>
    <property type="project" value="FlyBase"/>
</dbReference>
<dbReference type="GO" id="GO:0048058">
    <property type="term" value="P:compound eye corneal lens development"/>
    <property type="evidence" value="ECO:0000315"/>
    <property type="project" value="FlyBase"/>
</dbReference>
<dbReference type="GO" id="GO:0001745">
    <property type="term" value="P:compound eye morphogenesis"/>
    <property type="evidence" value="ECO:0000315"/>
    <property type="project" value="FlyBase"/>
</dbReference>
<dbReference type="GO" id="GO:0042051">
    <property type="term" value="P:compound eye photoreceptor development"/>
    <property type="evidence" value="ECO:0000315"/>
    <property type="project" value="FlyBase"/>
</dbReference>
<dbReference type="GO" id="GO:0031122">
    <property type="term" value="P:cytoplasmic microtubule organization"/>
    <property type="evidence" value="ECO:0000315"/>
    <property type="project" value="UniProtKB"/>
</dbReference>
<dbReference type="GO" id="GO:0099559">
    <property type="term" value="P:maintenance of alignment of postsynaptic density and presynaptic active zone"/>
    <property type="evidence" value="ECO:0000314"/>
    <property type="project" value="SynGO"/>
</dbReference>
<dbReference type="GO" id="GO:0048790">
    <property type="term" value="P:maintenance of presynaptic active zone structure"/>
    <property type="evidence" value="ECO:0000315"/>
    <property type="project" value="UniProtKB"/>
</dbReference>
<dbReference type="GO" id="GO:0008045">
    <property type="term" value="P:motor neuron axon guidance"/>
    <property type="evidence" value="ECO:0000315"/>
    <property type="project" value="FlyBase"/>
</dbReference>
<dbReference type="GO" id="GO:0007274">
    <property type="term" value="P:neuromuscular synaptic transmission"/>
    <property type="evidence" value="ECO:0000315"/>
    <property type="project" value="UniProtKB"/>
</dbReference>
<dbReference type="GO" id="GO:0034116">
    <property type="term" value="P:positive regulation of heterotypic cell-cell adhesion"/>
    <property type="evidence" value="ECO:0000315"/>
    <property type="project" value="UniProtKB"/>
</dbReference>
<dbReference type="GO" id="GO:0040017">
    <property type="term" value="P:positive regulation of locomotion"/>
    <property type="evidence" value="ECO:0000315"/>
    <property type="project" value="UniProtKB"/>
</dbReference>
<dbReference type="GO" id="GO:0001941">
    <property type="term" value="P:postsynaptic membrane organization"/>
    <property type="evidence" value="ECO:0000315"/>
    <property type="project" value="UniProtKB"/>
</dbReference>
<dbReference type="GO" id="GO:0099190">
    <property type="term" value="P:postsynaptic spectrin-associated cytoskeleton organization"/>
    <property type="evidence" value="ECO:0000314"/>
    <property type="project" value="SynGO"/>
</dbReference>
<dbReference type="GO" id="GO:0097090">
    <property type="term" value="P:presynaptic membrane organization"/>
    <property type="evidence" value="ECO:0000315"/>
    <property type="project" value="UniProtKB"/>
</dbReference>
<dbReference type="GO" id="GO:0045467">
    <property type="term" value="P:R7 cell development"/>
    <property type="evidence" value="ECO:0000315"/>
    <property type="project" value="FlyBase"/>
</dbReference>
<dbReference type="GO" id="GO:0034110">
    <property type="term" value="P:regulation of homotypic cell-cell adhesion"/>
    <property type="evidence" value="ECO:0000314"/>
    <property type="project" value="UniProtKB"/>
</dbReference>
<dbReference type="GO" id="GO:2000331">
    <property type="term" value="P:regulation of terminal button organization"/>
    <property type="evidence" value="ECO:0000315"/>
    <property type="project" value="UniProtKB"/>
</dbReference>
<dbReference type="GO" id="GO:0050808">
    <property type="term" value="P:synapse organization"/>
    <property type="evidence" value="ECO:0000314"/>
    <property type="project" value="UniProtKB"/>
</dbReference>
<dbReference type="GO" id="GO:0051124">
    <property type="term" value="P:synaptic assembly at neuromuscular junction"/>
    <property type="evidence" value="ECO:0000315"/>
    <property type="project" value="FlyBase"/>
</dbReference>
<dbReference type="GO" id="GO:0016200">
    <property type="term" value="P:synaptic target attraction"/>
    <property type="evidence" value="ECO:0000315"/>
    <property type="project" value="FlyBase"/>
</dbReference>
<dbReference type="GO" id="GO:0008039">
    <property type="term" value="P:synaptic target recognition"/>
    <property type="evidence" value="ECO:0000314"/>
    <property type="project" value="UniProtKB"/>
</dbReference>
<dbReference type="GO" id="GO:0048499">
    <property type="term" value="P:synaptic vesicle membrane organization"/>
    <property type="evidence" value="ECO:0000315"/>
    <property type="project" value="UniProtKB"/>
</dbReference>
<dbReference type="FunFam" id="2.120.10.30:FF:000154">
    <property type="entry name" value="AGAP011034-PA"/>
    <property type="match status" value="1"/>
</dbReference>
<dbReference type="FunFam" id="2.180.10.10:FF:000008">
    <property type="entry name" value="Odz, odd Oz/ten-m homolog"/>
    <property type="match status" value="1"/>
</dbReference>
<dbReference type="FunFam" id="2.10.25.10:FF:000021">
    <property type="entry name" value="Teneurin transmembrane protein 2"/>
    <property type="match status" value="2"/>
</dbReference>
<dbReference type="FunFam" id="2.10.25.10:FF:000474">
    <property type="entry name" value="Teneurin transmembrane protein 2"/>
    <property type="match status" value="1"/>
</dbReference>
<dbReference type="FunFam" id="2.10.25.10:FF:000013">
    <property type="entry name" value="Teneurin transmembrane protein 4"/>
    <property type="match status" value="1"/>
</dbReference>
<dbReference type="FunFam" id="2.120.10.30:FF:000033">
    <property type="entry name" value="teneurin-a isoform X3"/>
    <property type="match status" value="1"/>
</dbReference>
<dbReference type="FunFam" id="2.10.25.10:FF:000560">
    <property type="entry name" value="Teneurin-m-like Protein"/>
    <property type="match status" value="1"/>
</dbReference>
<dbReference type="FunFam" id="2.60.120.260:FF:000218">
    <property type="entry name" value="Uncharacterized protein, isoform D"/>
    <property type="match status" value="1"/>
</dbReference>
<dbReference type="Gene3D" id="2.60.120.260">
    <property type="entry name" value="Galactose-binding domain-like"/>
    <property type="match status" value="1"/>
</dbReference>
<dbReference type="Gene3D" id="2.10.25.10">
    <property type="entry name" value="Laminin"/>
    <property type="match status" value="6"/>
</dbReference>
<dbReference type="Gene3D" id="2.180.10.10">
    <property type="entry name" value="RHS repeat-associated core"/>
    <property type="match status" value="2"/>
</dbReference>
<dbReference type="Gene3D" id="2.120.10.30">
    <property type="entry name" value="TolB, C-terminal domain"/>
    <property type="match status" value="1"/>
</dbReference>
<dbReference type="Gene3D" id="2.130.10.10">
    <property type="entry name" value="YVTN repeat-like/Quinoprotein amine dehydrogenase"/>
    <property type="match status" value="1"/>
</dbReference>
<dbReference type="InterPro" id="IPR011042">
    <property type="entry name" value="6-blade_b-propeller_TolB-like"/>
</dbReference>
<dbReference type="InterPro" id="IPR008969">
    <property type="entry name" value="CarboxyPept-like_regulatory"/>
</dbReference>
<dbReference type="InterPro" id="IPR000742">
    <property type="entry name" value="EGF-like_dom"/>
</dbReference>
<dbReference type="InterPro" id="IPR056822">
    <property type="entry name" value="TEN_NHL"/>
</dbReference>
<dbReference type="InterPro" id="IPR056820">
    <property type="entry name" value="TEN_TTR-like"/>
</dbReference>
<dbReference type="InterPro" id="IPR056823">
    <property type="entry name" value="TEN_YD-shell"/>
</dbReference>
<dbReference type="InterPro" id="IPR051216">
    <property type="entry name" value="Teneurin"/>
</dbReference>
<dbReference type="InterPro" id="IPR028916">
    <property type="entry name" value="Tox-GHH_dom"/>
</dbReference>
<dbReference type="InterPro" id="IPR015943">
    <property type="entry name" value="WD40/YVTN_repeat-like_dom_sf"/>
</dbReference>
<dbReference type="InterPro" id="IPR006530">
    <property type="entry name" value="YD"/>
</dbReference>
<dbReference type="NCBIfam" id="TIGR01643">
    <property type="entry name" value="YD_repeat_2x"/>
    <property type="match status" value="1"/>
</dbReference>
<dbReference type="PANTHER" id="PTHR11219">
    <property type="entry name" value="TENEURIN AND N-ACETYLGLUCOSAMINE-1-PHOSPHODIESTER ALPHA-N-ACETYLGLUCOSAMINIDASE"/>
    <property type="match status" value="1"/>
</dbReference>
<dbReference type="PANTHER" id="PTHR11219:SF72">
    <property type="entry name" value="TENEURIN-M"/>
    <property type="match status" value="1"/>
</dbReference>
<dbReference type="Pfam" id="PF25024">
    <property type="entry name" value="EGF_TEN"/>
    <property type="match status" value="1"/>
</dbReference>
<dbReference type="Pfam" id="PF24329">
    <property type="entry name" value="FN-plug_TEN1-4"/>
    <property type="match status" value="1"/>
</dbReference>
<dbReference type="Pfam" id="PF23093">
    <property type="entry name" value="GBD_Tenm3"/>
    <property type="match status" value="1"/>
</dbReference>
<dbReference type="Pfam" id="PF25021">
    <property type="entry name" value="TEN_NHL"/>
    <property type="match status" value="1"/>
</dbReference>
<dbReference type="Pfam" id="PF25023">
    <property type="entry name" value="TEN_YD-shell"/>
    <property type="match status" value="1"/>
</dbReference>
<dbReference type="Pfam" id="PF15636">
    <property type="entry name" value="Tox-GHH"/>
    <property type="match status" value="1"/>
</dbReference>
<dbReference type="Pfam" id="PF25020">
    <property type="entry name" value="TTR_TEN1-4"/>
    <property type="match status" value="1"/>
</dbReference>
<dbReference type="SMART" id="SM00181">
    <property type="entry name" value="EGF"/>
    <property type="match status" value="8"/>
</dbReference>
<dbReference type="SUPFAM" id="SSF49464">
    <property type="entry name" value="Carboxypeptidase regulatory domain-like"/>
    <property type="match status" value="1"/>
</dbReference>
<dbReference type="SUPFAM" id="SSF101898">
    <property type="entry name" value="NHL repeat"/>
    <property type="match status" value="1"/>
</dbReference>
<dbReference type="PROSITE" id="PS00022">
    <property type="entry name" value="EGF_1"/>
    <property type="match status" value="8"/>
</dbReference>
<dbReference type="PROSITE" id="PS01186">
    <property type="entry name" value="EGF_2"/>
    <property type="match status" value="6"/>
</dbReference>
<dbReference type="PROSITE" id="PS50026">
    <property type="entry name" value="EGF_3"/>
    <property type="match status" value="4"/>
</dbReference>
<organism>
    <name type="scientific">Drosophila melanogaster</name>
    <name type="common">Fruit fly</name>
    <dbReference type="NCBI Taxonomy" id="7227"/>
    <lineage>
        <taxon>Eukaryota</taxon>
        <taxon>Metazoa</taxon>
        <taxon>Ecdysozoa</taxon>
        <taxon>Arthropoda</taxon>
        <taxon>Hexapoda</taxon>
        <taxon>Insecta</taxon>
        <taxon>Pterygota</taxon>
        <taxon>Neoptera</taxon>
        <taxon>Endopterygota</taxon>
        <taxon>Diptera</taxon>
        <taxon>Brachycera</taxon>
        <taxon>Muscomorpha</taxon>
        <taxon>Ephydroidea</taxon>
        <taxon>Drosophilidae</taxon>
        <taxon>Drosophila</taxon>
        <taxon>Sophophora</taxon>
    </lineage>
</organism>
<comment type="function">
    <text evidence="5 6 7 8">Involved in neural development, regulating the establishment of proper connectivity within the nervous system. Acts as a homophilic and heterophilic synaptic cell adhesion molecule that drives synapse assembly. Promotes bi-directional trans-synaptic signaling with Ten-a to organize neuromuscular synapses. Functions in olfactory synaptic partner matching by promoting homophilic cell adhesion between pre-synaptic olfactory receptor neurons (ORN) axons and post-synaptic projection neurons (PN) dendrites partner in the developing antennal lobe to form stable connections. Also required for peripheral axon growth cone guidance and target recognition of motor neurons.</text>
</comment>
<comment type="subunit">
    <text evidence="5 6 7">Homodimer. Heterodimer with Ten-a. Interacts with Ten-a; the interaction occurs at the neuromuscular junction. Interacts with alpha-Spec and cher.</text>
</comment>
<comment type="interaction">
    <interactant intactId="EBI-118556">
        <id>O61307</id>
    </interactant>
    <interactant intactId="EBI-133626">
        <id>Q9VEN1</id>
        <label>cher</label>
    </interactant>
    <organismsDiffer>false</organismsDiffer>
    <experiments>4</experiments>
</comment>
<comment type="subcellular location">
    <subcellularLocation>
        <location>Cytoplasm</location>
    </subcellularLocation>
    <subcellularLocation>
        <location>Postsynaptic cell membrane</location>
    </subcellularLocation>
    <subcellularLocation>
        <location>Synapse</location>
        <location>Synaptosome</location>
    </subcellularLocation>
    <subcellularLocation>
        <location evidence="11">Membrane</location>
        <topology evidence="11">Single-pass membrane protein</topology>
    </subcellularLocation>
    <text>Localizes at neuromuscular junction. Localizes in neuron cell bodies. Colocalizes with alpha-Spec at the membranous subsynaptic reticulum (SSR).</text>
</comment>
<comment type="alternative products">
    <event type="alternative splicing"/>
    <isoform>
        <id>O61307-1</id>
        <name>B</name>
        <sequence type="displayed"/>
    </isoform>
    <isoform>
        <id>O61307-2</id>
        <name>D</name>
        <sequence type="described" ref="VSP_054459 VSP_054460"/>
    </isoform>
</comment>
<comment type="tissue specificity">
    <text evidence="7">Expressed in muscles and motor neurons (at protein level).</text>
</comment>
<comment type="developmental stage">
    <text evidence="5 6 9 10">Expressed in the central nervous system and heart. Expressed in the developing antennal lobe. Expressed in subset of matching olfactory receptor neurons (ORN) and projection neurons (PN) in select glomeruli between 12 to 48 hours after puparium formation (apf) (at protein level). Expressed in odd-numbered blastoderm parasegments, the central nervous system, muscle attachment points and tracheal precursor cells. Expressed in the ventral nerve cord, the cardiac mesoderm and epidermis at late embryonic stages. Expressed in all imaginal disks.</text>
</comment>
<comment type="PTM">
    <text evidence="8">Phosphorylated. Phosphorylation occurs at tyrosine residues.</text>
</comment>
<comment type="PTM">
    <text evidence="8">Proteolytically cleaved.</text>
</comment>
<comment type="disruption phenotype">
    <text evidence="5">Shows peripheral motor neuron axon guidance defects.</text>
</comment>
<comment type="miscellaneous">
    <text>The name odz (odd Oz) reflects the odd pair rule nature of the gene and Oz reflects the prominent expression of the gene in the brain, heart and neurons, corresponding to the three gifts that the Wizard of Oz bestowed.</text>
</comment>
<comment type="similarity">
    <text evidence="11">Belongs to the tenascin family. Teneurin subfamily.</text>
</comment>
<comment type="sequence caution" evidence="11">
    <conflict type="erroneous initiation">
        <sequence resource="EMBL-CDS" id="CAA51678"/>
    </conflict>
    <text>Truncated N-terminus.</text>
</comment>